<evidence type="ECO:0000255" key="1">
    <source>
        <dbReference type="HAMAP-Rule" id="MF_00435"/>
    </source>
</evidence>
<evidence type="ECO:0000255" key="2">
    <source>
        <dbReference type="PROSITE-ProRule" id="PRU01197"/>
    </source>
</evidence>
<evidence type="ECO:0000255" key="3">
    <source>
        <dbReference type="PROSITE-ProRule" id="PRU01198"/>
    </source>
</evidence>
<keyword id="KW-0028">Amino-acid biosynthesis</keyword>
<keyword id="KW-0100">Branched-chain amino acid biosynthesis</keyword>
<keyword id="KW-0460">Magnesium</keyword>
<keyword id="KW-0479">Metal-binding</keyword>
<keyword id="KW-0521">NADP</keyword>
<keyword id="KW-0560">Oxidoreductase</keyword>
<keyword id="KW-1185">Reference proteome</keyword>
<organism>
    <name type="scientific">Methanocella arvoryzae (strain DSM 22066 / NBRC 105507 / MRE50)</name>
    <dbReference type="NCBI Taxonomy" id="351160"/>
    <lineage>
        <taxon>Archaea</taxon>
        <taxon>Methanobacteriati</taxon>
        <taxon>Methanobacteriota</taxon>
        <taxon>Stenosarchaea group</taxon>
        <taxon>Methanomicrobia</taxon>
        <taxon>Methanocellales</taxon>
        <taxon>Methanocellaceae</taxon>
        <taxon>Methanocella</taxon>
    </lineage>
</organism>
<accession>Q0W834</accession>
<name>ILVC_METAR</name>
<sequence>MATIYYEKDADLKILKGKKIAIIGYGSQGMAQSQSLKDSGLDVVVGLRKGGASWEQAKKDGMKVATIEEAAQQADYIQMLIPDELQGKVYHEQIEPYMKKGKILGFSHGFNIHYGMIKPGKDIDVVMIAPKSPGHLVRRMYQQGAGVPALVAIQQDASKKALQYALAYAAGIGCTRAGVLATTFKEETETDLFGEQVDLCGGCTEMVKASFETLVNAGYQPEIAYFETLHELKLIVDLMYEGGMAAMWDSVSDTAQYGGMTRGRRIINEQSRMEMWRTLEEIQDGRFAREWVLENMAGRPHFNALTQQDAEHPIEIVGKELRSMMPWLKQKK</sequence>
<dbReference type="EC" id="1.1.1.86" evidence="1"/>
<dbReference type="EMBL" id="AM114193">
    <property type="protein sequence ID" value="CAJ35459.1"/>
    <property type="molecule type" value="Genomic_DNA"/>
</dbReference>
<dbReference type="RefSeq" id="WP_012037035.1">
    <property type="nucleotide sequence ID" value="NC_009464.1"/>
</dbReference>
<dbReference type="SMR" id="Q0W834"/>
<dbReference type="STRING" id="351160.LRC519"/>
<dbReference type="GeneID" id="5145121"/>
<dbReference type="KEGG" id="rci:LRC519"/>
<dbReference type="PATRIC" id="fig|351160.9.peg.2781"/>
<dbReference type="eggNOG" id="arCOG04465">
    <property type="taxonomic scope" value="Archaea"/>
</dbReference>
<dbReference type="OrthoDB" id="6064at2157"/>
<dbReference type="UniPathway" id="UPA00047">
    <property type="reaction ID" value="UER00056"/>
</dbReference>
<dbReference type="UniPathway" id="UPA00049">
    <property type="reaction ID" value="UER00060"/>
</dbReference>
<dbReference type="Proteomes" id="UP000000663">
    <property type="component" value="Chromosome"/>
</dbReference>
<dbReference type="GO" id="GO:0004455">
    <property type="term" value="F:ketol-acid reductoisomerase activity"/>
    <property type="evidence" value="ECO:0007669"/>
    <property type="project" value="UniProtKB-UniRule"/>
</dbReference>
<dbReference type="GO" id="GO:0000287">
    <property type="term" value="F:magnesium ion binding"/>
    <property type="evidence" value="ECO:0007669"/>
    <property type="project" value="UniProtKB-UniRule"/>
</dbReference>
<dbReference type="GO" id="GO:0050661">
    <property type="term" value="F:NADP binding"/>
    <property type="evidence" value="ECO:0007669"/>
    <property type="project" value="InterPro"/>
</dbReference>
<dbReference type="GO" id="GO:0009097">
    <property type="term" value="P:isoleucine biosynthetic process"/>
    <property type="evidence" value="ECO:0007669"/>
    <property type="project" value="UniProtKB-UniRule"/>
</dbReference>
<dbReference type="GO" id="GO:0009099">
    <property type="term" value="P:L-valine biosynthetic process"/>
    <property type="evidence" value="ECO:0007669"/>
    <property type="project" value="UniProtKB-UniRule"/>
</dbReference>
<dbReference type="FunFam" id="3.40.50.720:FF:000023">
    <property type="entry name" value="Ketol-acid reductoisomerase (NADP(+))"/>
    <property type="match status" value="1"/>
</dbReference>
<dbReference type="Gene3D" id="6.10.240.10">
    <property type="match status" value="1"/>
</dbReference>
<dbReference type="Gene3D" id="3.40.50.720">
    <property type="entry name" value="NAD(P)-binding Rossmann-like Domain"/>
    <property type="match status" value="1"/>
</dbReference>
<dbReference type="HAMAP" id="MF_00435">
    <property type="entry name" value="IlvC"/>
    <property type="match status" value="1"/>
</dbReference>
<dbReference type="InterPro" id="IPR008927">
    <property type="entry name" value="6-PGluconate_DH-like_C_sf"/>
</dbReference>
<dbReference type="InterPro" id="IPR013023">
    <property type="entry name" value="KARI"/>
</dbReference>
<dbReference type="InterPro" id="IPR000506">
    <property type="entry name" value="KARI_C"/>
</dbReference>
<dbReference type="InterPro" id="IPR013116">
    <property type="entry name" value="KARI_N"/>
</dbReference>
<dbReference type="InterPro" id="IPR014359">
    <property type="entry name" value="KARI_prok"/>
</dbReference>
<dbReference type="InterPro" id="IPR036291">
    <property type="entry name" value="NAD(P)-bd_dom_sf"/>
</dbReference>
<dbReference type="NCBIfam" id="TIGR00465">
    <property type="entry name" value="ilvC"/>
    <property type="match status" value="1"/>
</dbReference>
<dbReference type="NCBIfam" id="NF004017">
    <property type="entry name" value="PRK05479.1"/>
    <property type="match status" value="1"/>
</dbReference>
<dbReference type="NCBIfam" id="NF009940">
    <property type="entry name" value="PRK13403.1"/>
    <property type="match status" value="1"/>
</dbReference>
<dbReference type="PANTHER" id="PTHR21371">
    <property type="entry name" value="KETOL-ACID REDUCTOISOMERASE, MITOCHONDRIAL"/>
    <property type="match status" value="1"/>
</dbReference>
<dbReference type="PANTHER" id="PTHR21371:SF1">
    <property type="entry name" value="KETOL-ACID REDUCTOISOMERASE, MITOCHONDRIAL"/>
    <property type="match status" value="1"/>
</dbReference>
<dbReference type="Pfam" id="PF01450">
    <property type="entry name" value="KARI_C"/>
    <property type="match status" value="1"/>
</dbReference>
<dbReference type="Pfam" id="PF07991">
    <property type="entry name" value="KARI_N"/>
    <property type="match status" value="1"/>
</dbReference>
<dbReference type="PIRSF" id="PIRSF000116">
    <property type="entry name" value="IlvC_gammaproteo"/>
    <property type="match status" value="1"/>
</dbReference>
<dbReference type="SUPFAM" id="SSF48179">
    <property type="entry name" value="6-phosphogluconate dehydrogenase C-terminal domain-like"/>
    <property type="match status" value="1"/>
</dbReference>
<dbReference type="SUPFAM" id="SSF51735">
    <property type="entry name" value="NAD(P)-binding Rossmann-fold domains"/>
    <property type="match status" value="1"/>
</dbReference>
<dbReference type="PROSITE" id="PS51851">
    <property type="entry name" value="KARI_C"/>
    <property type="match status" value="1"/>
</dbReference>
<dbReference type="PROSITE" id="PS51850">
    <property type="entry name" value="KARI_N"/>
    <property type="match status" value="1"/>
</dbReference>
<comment type="function">
    <text evidence="1">Involved in the biosynthesis of branched-chain amino acids (BCAA). Catalyzes an alkyl-migration followed by a ketol-acid reduction of (S)-2-acetolactate (S2AL) to yield (R)-2,3-dihydroxy-isovalerate. In the isomerase reaction, S2AL is rearranged via a Mg-dependent methyl migration to produce 3-hydroxy-3-methyl-2-ketobutyrate (HMKB). In the reductase reaction, this 2-ketoacid undergoes a metal-dependent reduction by NADPH to yield (R)-2,3-dihydroxy-isovalerate.</text>
</comment>
<comment type="catalytic activity">
    <reaction evidence="1">
        <text>(2R)-2,3-dihydroxy-3-methylbutanoate + NADP(+) = (2S)-2-acetolactate + NADPH + H(+)</text>
        <dbReference type="Rhea" id="RHEA:22068"/>
        <dbReference type="ChEBI" id="CHEBI:15378"/>
        <dbReference type="ChEBI" id="CHEBI:49072"/>
        <dbReference type="ChEBI" id="CHEBI:57783"/>
        <dbReference type="ChEBI" id="CHEBI:58349"/>
        <dbReference type="ChEBI" id="CHEBI:58476"/>
        <dbReference type="EC" id="1.1.1.86"/>
    </reaction>
</comment>
<comment type="catalytic activity">
    <reaction evidence="1">
        <text>(2R,3R)-2,3-dihydroxy-3-methylpentanoate + NADP(+) = (S)-2-ethyl-2-hydroxy-3-oxobutanoate + NADPH + H(+)</text>
        <dbReference type="Rhea" id="RHEA:13493"/>
        <dbReference type="ChEBI" id="CHEBI:15378"/>
        <dbReference type="ChEBI" id="CHEBI:49256"/>
        <dbReference type="ChEBI" id="CHEBI:49258"/>
        <dbReference type="ChEBI" id="CHEBI:57783"/>
        <dbReference type="ChEBI" id="CHEBI:58349"/>
        <dbReference type="EC" id="1.1.1.86"/>
    </reaction>
</comment>
<comment type="cofactor">
    <cofactor evidence="1">
        <name>Mg(2+)</name>
        <dbReference type="ChEBI" id="CHEBI:18420"/>
    </cofactor>
    <text evidence="1">Binds 2 magnesium ions per subunit.</text>
</comment>
<comment type="pathway">
    <text evidence="1">Amino-acid biosynthesis; L-isoleucine biosynthesis; L-isoleucine from 2-oxobutanoate: step 2/4.</text>
</comment>
<comment type="pathway">
    <text evidence="1">Amino-acid biosynthesis; L-valine biosynthesis; L-valine from pyruvate: step 2/4.</text>
</comment>
<comment type="similarity">
    <text evidence="1">Belongs to the ketol-acid reductoisomerase family.</text>
</comment>
<protein>
    <recommendedName>
        <fullName evidence="1">Ketol-acid reductoisomerase (NADP(+))</fullName>
        <shortName evidence="1">KARI</shortName>
        <ecNumber evidence="1">1.1.1.86</ecNumber>
    </recommendedName>
    <alternativeName>
        <fullName evidence="1">Acetohydroxy-acid isomeroreductase</fullName>
        <shortName evidence="1">AHIR</shortName>
    </alternativeName>
    <alternativeName>
        <fullName evidence="1">Alpha-keto-beta-hydroxylacyl reductoisomerase</fullName>
    </alternativeName>
    <alternativeName>
        <fullName evidence="1">Ketol-acid reductoisomerase type 1</fullName>
    </alternativeName>
    <alternativeName>
        <fullName evidence="1">Ketol-acid reductoisomerase type I</fullName>
    </alternativeName>
</protein>
<reference key="1">
    <citation type="journal article" date="2006" name="Science">
        <title>Genome of rice cluster I archaea -- the key methane producers in the rice rhizosphere.</title>
        <authorList>
            <person name="Erkel C."/>
            <person name="Kube M."/>
            <person name="Reinhardt R."/>
            <person name="Liesack W."/>
        </authorList>
    </citation>
    <scope>NUCLEOTIDE SEQUENCE [LARGE SCALE GENOMIC DNA]</scope>
    <source>
        <strain>DSM 22066 / NBRC 105507 / MRE50</strain>
    </source>
</reference>
<feature type="chain" id="PRO_1000050589" description="Ketol-acid reductoisomerase (NADP(+))">
    <location>
        <begin position="1"/>
        <end position="332"/>
    </location>
</feature>
<feature type="domain" description="KARI N-terminal Rossmann" evidence="2">
    <location>
        <begin position="1"/>
        <end position="182"/>
    </location>
</feature>
<feature type="domain" description="KARI C-terminal knotted" evidence="3">
    <location>
        <begin position="183"/>
        <end position="328"/>
    </location>
</feature>
<feature type="active site" evidence="1">
    <location>
        <position position="108"/>
    </location>
</feature>
<feature type="binding site" evidence="1">
    <location>
        <begin position="25"/>
        <end position="28"/>
    </location>
    <ligand>
        <name>NADP(+)</name>
        <dbReference type="ChEBI" id="CHEBI:58349"/>
    </ligand>
</feature>
<feature type="binding site" evidence="1">
    <location>
        <position position="48"/>
    </location>
    <ligand>
        <name>NADP(+)</name>
        <dbReference type="ChEBI" id="CHEBI:58349"/>
    </ligand>
</feature>
<feature type="binding site" evidence="1">
    <location>
        <position position="53"/>
    </location>
    <ligand>
        <name>NADP(+)</name>
        <dbReference type="ChEBI" id="CHEBI:58349"/>
    </ligand>
</feature>
<feature type="binding site" evidence="1">
    <location>
        <begin position="83"/>
        <end position="86"/>
    </location>
    <ligand>
        <name>NADP(+)</name>
        <dbReference type="ChEBI" id="CHEBI:58349"/>
    </ligand>
</feature>
<feature type="binding site" evidence="1">
    <location>
        <position position="134"/>
    </location>
    <ligand>
        <name>NADP(+)</name>
        <dbReference type="ChEBI" id="CHEBI:58349"/>
    </ligand>
</feature>
<feature type="binding site" evidence="1">
    <location>
        <position position="191"/>
    </location>
    <ligand>
        <name>Mg(2+)</name>
        <dbReference type="ChEBI" id="CHEBI:18420"/>
        <label>1</label>
    </ligand>
</feature>
<feature type="binding site" evidence="1">
    <location>
        <position position="191"/>
    </location>
    <ligand>
        <name>Mg(2+)</name>
        <dbReference type="ChEBI" id="CHEBI:18420"/>
        <label>2</label>
    </ligand>
</feature>
<feature type="binding site" evidence="1">
    <location>
        <position position="195"/>
    </location>
    <ligand>
        <name>Mg(2+)</name>
        <dbReference type="ChEBI" id="CHEBI:18420"/>
        <label>1</label>
    </ligand>
</feature>
<feature type="binding site" evidence="1">
    <location>
        <position position="227"/>
    </location>
    <ligand>
        <name>Mg(2+)</name>
        <dbReference type="ChEBI" id="CHEBI:18420"/>
        <label>2</label>
    </ligand>
</feature>
<feature type="binding site" evidence="1">
    <location>
        <position position="231"/>
    </location>
    <ligand>
        <name>Mg(2+)</name>
        <dbReference type="ChEBI" id="CHEBI:18420"/>
        <label>2</label>
    </ligand>
</feature>
<feature type="binding site" evidence="1">
    <location>
        <position position="252"/>
    </location>
    <ligand>
        <name>substrate</name>
    </ligand>
</feature>
<proteinExistence type="inferred from homology"/>
<gene>
    <name evidence="1" type="primary">ilvC</name>
    <name type="ordered locus">UNCMA_27190</name>
    <name type="ORF">LRC519</name>
</gene>